<reference key="1">
    <citation type="journal article" date="2003" name="DNA Res.">
        <title>Complete sequence and analysis of the plastid genome of the unicellular red alga Cyanidioschyzon merolae.</title>
        <authorList>
            <person name="Ohta N."/>
            <person name="Matsuzaki M."/>
            <person name="Misumi O."/>
            <person name="Miyagishima S.-Y."/>
            <person name="Nozaki H."/>
            <person name="Tanaka K."/>
            <person name="Shin-i T."/>
            <person name="Kohara Y."/>
            <person name="Kuroiwa T."/>
        </authorList>
    </citation>
    <scope>NUCLEOTIDE SEQUENCE [LARGE SCALE GENOMIC DNA]</scope>
    <source>
        <strain>NIES-3377 / 10D</strain>
    </source>
</reference>
<evidence type="ECO:0000255" key="1">
    <source>
        <dbReference type="HAMAP-Rule" id="MF_00379"/>
    </source>
</evidence>
<name>MNME_CYAM1</name>
<gene>
    <name evidence="1" type="primary">mnmE</name>
    <name evidence="1" type="synonym">thdF</name>
</gene>
<sequence length="446" mass="49637">MTLANVFIQDTIVAIATYLAPSSVAIIRLSGNEAIRLAKSICVKKNHWHSHRIIHTYVQDDQNQLIDEVLVLPMLAPRSYTRQDVVEIHAHGGVVVAQTILQLLINRGARLAKPGEFTLRAFINGRLTLTQAESVLELIHAPSVAMAKKALSNLRGALSTQLHQVRSELIQLLAQIEAHLDFDLDNTFVFNSFINSLTNIINQIQNLLNTPSKFYRYGIQVALLGPANAGKSTLFNALIGEERSIVTPIAGTTTDVVEATLQWQQICFRFFDTAGLKEASSEIETKAMAKAQQIAKQCDLILWIIDATSPNLPIPPYLLNSKPLLVVYNKIDVDSSDVLDHVLDHTSYPTVKVSALYATNLSQLKQLIWQQATQLFQLDGIYINERQSQLLQQAKQHLCNLQSALDEGYPLEIISWHLKNAIQCLDENDVNASTLNAIFSQFCIGK</sequence>
<protein>
    <recommendedName>
        <fullName evidence="1">Probable tRNA modification GTPase MnmE</fullName>
        <ecNumber evidence="1">3.6.-.-</ecNumber>
    </recommendedName>
</protein>
<keyword id="KW-0150">Chloroplast</keyword>
<keyword id="KW-0342">GTP-binding</keyword>
<keyword id="KW-0378">Hydrolase</keyword>
<keyword id="KW-0460">Magnesium</keyword>
<keyword id="KW-0479">Metal-binding</keyword>
<keyword id="KW-0547">Nucleotide-binding</keyword>
<keyword id="KW-0934">Plastid</keyword>
<keyword id="KW-0630">Potassium</keyword>
<keyword id="KW-1185">Reference proteome</keyword>
<keyword id="KW-0819">tRNA processing</keyword>
<geneLocation type="chloroplast"/>
<dbReference type="EC" id="3.6.-.-" evidence="1"/>
<dbReference type="EMBL" id="AB002583">
    <property type="protein sequence ID" value="BAC76115.1"/>
    <property type="molecule type" value="Genomic_DNA"/>
</dbReference>
<dbReference type="SMR" id="Q85FG3"/>
<dbReference type="STRING" id="280699.Q85FG3"/>
<dbReference type="EnsemblPlants" id="CMV025CT">
    <property type="protein sequence ID" value="CMV025CT"/>
    <property type="gene ID" value="CMV025C"/>
</dbReference>
<dbReference type="Gramene" id="CMV025CT">
    <property type="protein sequence ID" value="CMV025CT"/>
    <property type="gene ID" value="CMV025C"/>
</dbReference>
<dbReference type="KEGG" id="cme:CymeCp021"/>
<dbReference type="eggNOG" id="KOG1191">
    <property type="taxonomic scope" value="Eukaryota"/>
</dbReference>
<dbReference type="HOGENOM" id="CLU_019624_4_1_1"/>
<dbReference type="Proteomes" id="UP000007014">
    <property type="component" value="Chloroplast"/>
</dbReference>
<dbReference type="GO" id="GO:0009507">
    <property type="term" value="C:chloroplast"/>
    <property type="evidence" value="ECO:0007669"/>
    <property type="project" value="UniProtKB-SubCell"/>
</dbReference>
<dbReference type="GO" id="GO:0005829">
    <property type="term" value="C:cytosol"/>
    <property type="evidence" value="ECO:0007669"/>
    <property type="project" value="TreeGrafter"/>
</dbReference>
<dbReference type="GO" id="GO:0005525">
    <property type="term" value="F:GTP binding"/>
    <property type="evidence" value="ECO:0007669"/>
    <property type="project" value="UniProtKB-UniRule"/>
</dbReference>
<dbReference type="GO" id="GO:0003924">
    <property type="term" value="F:GTPase activity"/>
    <property type="evidence" value="ECO:0007669"/>
    <property type="project" value="UniProtKB-UniRule"/>
</dbReference>
<dbReference type="GO" id="GO:0046872">
    <property type="term" value="F:metal ion binding"/>
    <property type="evidence" value="ECO:0007669"/>
    <property type="project" value="UniProtKB-KW"/>
</dbReference>
<dbReference type="GO" id="GO:0030488">
    <property type="term" value="P:tRNA methylation"/>
    <property type="evidence" value="ECO:0007669"/>
    <property type="project" value="TreeGrafter"/>
</dbReference>
<dbReference type="GO" id="GO:0002098">
    <property type="term" value="P:tRNA wobble uridine modification"/>
    <property type="evidence" value="ECO:0007669"/>
    <property type="project" value="TreeGrafter"/>
</dbReference>
<dbReference type="CDD" id="cd04164">
    <property type="entry name" value="trmE"/>
    <property type="match status" value="1"/>
</dbReference>
<dbReference type="CDD" id="cd14858">
    <property type="entry name" value="TrmE_N"/>
    <property type="match status" value="1"/>
</dbReference>
<dbReference type="FunFam" id="3.30.1360.120:FF:000003">
    <property type="entry name" value="tRNA modification GTPase MnmE"/>
    <property type="match status" value="1"/>
</dbReference>
<dbReference type="Gene3D" id="3.40.50.300">
    <property type="entry name" value="P-loop containing nucleotide triphosphate hydrolases"/>
    <property type="match status" value="1"/>
</dbReference>
<dbReference type="Gene3D" id="3.30.1360.120">
    <property type="entry name" value="Probable tRNA modification gtpase trme, domain 1"/>
    <property type="match status" value="1"/>
</dbReference>
<dbReference type="Gene3D" id="1.20.120.430">
    <property type="entry name" value="tRNA modification GTPase MnmE domain 2"/>
    <property type="match status" value="1"/>
</dbReference>
<dbReference type="HAMAP" id="MF_00379">
    <property type="entry name" value="GTPase_MnmE"/>
    <property type="match status" value="1"/>
</dbReference>
<dbReference type="InterPro" id="IPR031168">
    <property type="entry name" value="G_TrmE"/>
</dbReference>
<dbReference type="InterPro" id="IPR006073">
    <property type="entry name" value="GTP-bd"/>
</dbReference>
<dbReference type="InterPro" id="IPR018948">
    <property type="entry name" value="GTP-bd_TrmE_N"/>
</dbReference>
<dbReference type="InterPro" id="IPR004520">
    <property type="entry name" value="GTPase_MnmE"/>
</dbReference>
<dbReference type="InterPro" id="IPR027368">
    <property type="entry name" value="MnmE_dom2"/>
</dbReference>
<dbReference type="InterPro" id="IPR025867">
    <property type="entry name" value="MnmE_helical"/>
</dbReference>
<dbReference type="InterPro" id="IPR027417">
    <property type="entry name" value="P-loop_NTPase"/>
</dbReference>
<dbReference type="InterPro" id="IPR005225">
    <property type="entry name" value="Small_GTP-bd"/>
</dbReference>
<dbReference type="InterPro" id="IPR027266">
    <property type="entry name" value="TrmE/GcvT_dom1"/>
</dbReference>
<dbReference type="NCBIfam" id="TIGR00450">
    <property type="entry name" value="mnmE_trmE_thdF"/>
    <property type="match status" value="1"/>
</dbReference>
<dbReference type="NCBIfam" id="TIGR00231">
    <property type="entry name" value="small_GTP"/>
    <property type="match status" value="1"/>
</dbReference>
<dbReference type="PANTHER" id="PTHR42714">
    <property type="entry name" value="TRNA MODIFICATION GTPASE GTPBP3"/>
    <property type="match status" value="1"/>
</dbReference>
<dbReference type="PANTHER" id="PTHR42714:SF2">
    <property type="entry name" value="TRNA MODIFICATION GTPASE GTPBP3, MITOCHONDRIAL"/>
    <property type="match status" value="1"/>
</dbReference>
<dbReference type="Pfam" id="PF01926">
    <property type="entry name" value="MMR_HSR1"/>
    <property type="match status" value="1"/>
</dbReference>
<dbReference type="Pfam" id="PF12631">
    <property type="entry name" value="MnmE_helical"/>
    <property type="match status" value="1"/>
</dbReference>
<dbReference type="Pfam" id="PF10396">
    <property type="entry name" value="TrmE_N"/>
    <property type="match status" value="1"/>
</dbReference>
<dbReference type="SUPFAM" id="SSF52540">
    <property type="entry name" value="P-loop containing nucleoside triphosphate hydrolases"/>
    <property type="match status" value="1"/>
</dbReference>
<dbReference type="PROSITE" id="PS51709">
    <property type="entry name" value="G_TRME"/>
    <property type="match status" value="1"/>
</dbReference>
<organism>
    <name type="scientific">Cyanidioschyzon merolae (strain NIES-3377 / 10D)</name>
    <name type="common">Unicellular red alga</name>
    <dbReference type="NCBI Taxonomy" id="280699"/>
    <lineage>
        <taxon>Eukaryota</taxon>
        <taxon>Rhodophyta</taxon>
        <taxon>Bangiophyceae</taxon>
        <taxon>Cyanidiales</taxon>
        <taxon>Cyanidiaceae</taxon>
        <taxon>Cyanidioschyzon</taxon>
    </lineage>
</organism>
<comment type="function">
    <text evidence="1">Exhibits a very high intrinsic GTPase hydrolysis rate. Involved in the addition of a carboxymethylaminomethyl (cmnm) group at the wobble position (U34) of certain tRNAs, forming tRNA-cmnm(5)s(2)U34.</text>
</comment>
<comment type="cofactor">
    <cofactor evidence="1">
        <name>K(+)</name>
        <dbReference type="ChEBI" id="CHEBI:29103"/>
    </cofactor>
    <text evidence="1">Binds 1 potassium ion per subunit.</text>
</comment>
<comment type="subcellular location">
    <subcellularLocation>
        <location>Plastid</location>
        <location>Chloroplast</location>
    </subcellularLocation>
</comment>
<comment type="similarity">
    <text evidence="1">Belongs to the TRAFAC class TrmE-Era-EngA-EngB-Septin-like GTPase superfamily. TrmE GTPase family.</text>
</comment>
<feature type="chain" id="PRO_0000345945" description="Probable tRNA modification GTPase MnmE">
    <location>
        <begin position="1"/>
        <end position="446"/>
    </location>
</feature>
<feature type="domain" description="TrmE-type G">
    <location>
        <begin position="218"/>
        <end position="373"/>
    </location>
</feature>
<feature type="binding site" evidence="1">
    <location>
        <position position="28"/>
    </location>
    <ligand>
        <name>(6S)-5-formyl-5,6,7,8-tetrahydrofolate</name>
        <dbReference type="ChEBI" id="CHEBI:57457"/>
    </ligand>
</feature>
<feature type="binding site" evidence="1">
    <location>
        <position position="87"/>
    </location>
    <ligand>
        <name>(6S)-5-formyl-5,6,7,8-tetrahydrofolate</name>
        <dbReference type="ChEBI" id="CHEBI:57457"/>
    </ligand>
</feature>
<feature type="binding site" evidence="1">
    <location>
        <position position="126"/>
    </location>
    <ligand>
        <name>(6S)-5-formyl-5,6,7,8-tetrahydrofolate</name>
        <dbReference type="ChEBI" id="CHEBI:57457"/>
    </ligand>
</feature>
<feature type="binding site" evidence="1">
    <location>
        <begin position="228"/>
        <end position="233"/>
    </location>
    <ligand>
        <name>GTP</name>
        <dbReference type="ChEBI" id="CHEBI:37565"/>
    </ligand>
</feature>
<feature type="binding site" evidence="1">
    <location>
        <position position="228"/>
    </location>
    <ligand>
        <name>K(+)</name>
        <dbReference type="ChEBI" id="CHEBI:29103"/>
    </ligand>
</feature>
<feature type="binding site" evidence="1">
    <location>
        <position position="232"/>
    </location>
    <ligand>
        <name>Mg(2+)</name>
        <dbReference type="ChEBI" id="CHEBI:18420"/>
    </ligand>
</feature>
<feature type="binding site" evidence="1">
    <location>
        <begin position="247"/>
        <end position="253"/>
    </location>
    <ligand>
        <name>GTP</name>
        <dbReference type="ChEBI" id="CHEBI:37565"/>
    </ligand>
</feature>
<feature type="binding site" evidence="1">
    <location>
        <position position="247"/>
    </location>
    <ligand>
        <name>K(+)</name>
        <dbReference type="ChEBI" id="CHEBI:29103"/>
    </ligand>
</feature>
<feature type="binding site" evidence="1">
    <location>
        <position position="249"/>
    </location>
    <ligand>
        <name>K(+)</name>
        <dbReference type="ChEBI" id="CHEBI:29103"/>
    </ligand>
</feature>
<feature type="binding site" evidence="1">
    <location>
        <position position="252"/>
    </location>
    <ligand>
        <name>K(+)</name>
        <dbReference type="ChEBI" id="CHEBI:29103"/>
    </ligand>
</feature>
<feature type="binding site" evidence="1">
    <location>
        <position position="253"/>
    </location>
    <ligand>
        <name>Mg(2+)</name>
        <dbReference type="ChEBI" id="CHEBI:18420"/>
    </ligand>
</feature>
<feature type="binding site" evidence="1">
    <location>
        <begin position="272"/>
        <end position="275"/>
    </location>
    <ligand>
        <name>GTP</name>
        <dbReference type="ChEBI" id="CHEBI:37565"/>
    </ligand>
</feature>
<feature type="binding site" evidence="1">
    <location>
        <position position="446"/>
    </location>
    <ligand>
        <name>(6S)-5-formyl-5,6,7,8-tetrahydrofolate</name>
        <dbReference type="ChEBI" id="CHEBI:57457"/>
    </ligand>
</feature>
<proteinExistence type="inferred from homology"/>
<accession>Q85FG3</accession>